<name>ACCC_ECOLI</name>
<accession>P24182</accession>
<accession>Q2M8V9</accession>
<sequence>MLDKIVIANRGEIALRILRACKELGIKTVAVHSSADRDLKHVLLADETVCIGPAPSVKSYLNIPAIISAAEITGAVAIHPGYGFLSENANFAEQVERSGFIFIGPKAETIRLMGDKVSAIAAMKKAGVPCVPGSDGPLGDDMDKNRAIAKRIGYPVIIKASGGGGGRGMRVVRGDAELAQSISMTRAEAKAAFSNDMVYMEKYLENPRHVEIQVLADGQGNAIYLAERDCSMQRRHQKVVEEAPAPGITPELRRYIGERCAKACVDIGYRGAGTFEFLFENGEFYFIEMNTRIQVEHPVTEMITGVDLIKEQLRIAAGQPLSIKQEEVHVRGHAVECRINAEDPNTFLPSPGKITRFHAPGGFGVRWESHIYAGYTVPPYYDSMIGKLICYGENRDVAIARMKNALQELIIDGIKTNVDLQIRIMNDENFQHGGTNIHYLEKKLGLQEK</sequence>
<keyword id="KW-0002">3D-structure</keyword>
<keyword id="KW-0067">ATP-binding</keyword>
<keyword id="KW-0092">Biotin</keyword>
<keyword id="KW-0903">Direct protein sequencing</keyword>
<keyword id="KW-0275">Fatty acid biosynthesis</keyword>
<keyword id="KW-0276">Fatty acid metabolism</keyword>
<keyword id="KW-0436">Ligase</keyword>
<keyword id="KW-0444">Lipid biosynthesis</keyword>
<keyword id="KW-0443">Lipid metabolism</keyword>
<keyword id="KW-0460">Magnesium</keyword>
<keyword id="KW-0464">Manganese</keyword>
<keyword id="KW-0479">Metal-binding</keyword>
<keyword id="KW-0547">Nucleotide-binding</keyword>
<keyword id="KW-1185">Reference proteome</keyword>
<evidence type="ECO:0000255" key="1">
    <source>
        <dbReference type="PROSITE-ProRule" id="PRU00409"/>
    </source>
</evidence>
<evidence type="ECO:0000269" key="2">
    <source>
    </source>
</evidence>
<evidence type="ECO:0000269" key="3">
    <source>
    </source>
</evidence>
<evidence type="ECO:0000269" key="4">
    <source>
    </source>
</evidence>
<evidence type="ECO:0000305" key="5"/>
<evidence type="ECO:0000305" key="6">
    <source>
    </source>
</evidence>
<evidence type="ECO:0000305" key="7">
    <source>
    </source>
</evidence>
<evidence type="ECO:0007744" key="8">
    <source>
        <dbReference type="PDB" id="1DV1"/>
    </source>
</evidence>
<evidence type="ECO:0007744" key="9">
    <source>
        <dbReference type="PDB" id="1DV2"/>
    </source>
</evidence>
<evidence type="ECO:0007744" key="10">
    <source>
        <dbReference type="PDB" id="3G8C"/>
    </source>
</evidence>
<evidence type="ECO:0007744" key="11">
    <source>
        <dbReference type="PDB" id="3G8D"/>
    </source>
</evidence>
<evidence type="ECO:0007829" key="12">
    <source>
        <dbReference type="PDB" id="2W6O"/>
    </source>
</evidence>
<evidence type="ECO:0007829" key="13">
    <source>
        <dbReference type="PDB" id="2W70"/>
    </source>
</evidence>
<gene>
    <name type="primary">accC</name>
    <name type="synonym">fabG</name>
    <name type="ordered locus">b3256</name>
    <name type="ordered locus">JW3224</name>
</gene>
<reference key="1">
    <citation type="journal article" date="1991" name="Proc. Natl. Acad. Sci. U.S.A.">
        <title>Acetyl-CoA carboxylase from Escherichia coli: gene organization and nucleotide sequence of the biotin carboxylase subunit.</title>
        <authorList>
            <person name="Kondo H."/>
            <person name="Shiratsuchi K."/>
            <person name="Yoshimoto T."/>
            <person name="Masuda T."/>
            <person name="Kitazono A."/>
            <person name="Tsuru D."/>
            <person name="Anai M."/>
            <person name="Sekiguchi M."/>
            <person name="Tanabe T."/>
        </authorList>
    </citation>
    <scope>NUCLEOTIDE SEQUENCE [GENOMIC DNA]</scope>
    <scope>PARTIAL PROTEIN SEQUENCE</scope>
    <source>
        <strain>K12</strain>
    </source>
</reference>
<reference key="2">
    <citation type="journal article" date="1992" name="J. Biol. Chem.">
        <title>The gene encoding the biotin carboxylase subunit of Escherichia coli acetyl-CoA carboxylase.</title>
        <authorList>
            <person name="Li S.-J."/>
            <person name="Cronan J.E. Jr."/>
        </authorList>
    </citation>
    <scope>NUCLEOTIDE SEQUENCE [GENOMIC DNA]</scope>
</reference>
<reference key="3">
    <citation type="submission" date="1992-07" db="EMBL/GenBank/DDBJ databases">
        <title>Cloning and characterization of the E. coli fabEG operon encoding subunits of acetyl-CoA carboxylase.</title>
        <authorList>
            <person name="Best E.A."/>
            <person name="Knauf V.C."/>
        </authorList>
    </citation>
    <scope>NUCLEOTIDE SEQUENCE [GENOMIC DNA]</scope>
</reference>
<reference key="4">
    <citation type="journal article" date="1997" name="Science">
        <title>The complete genome sequence of Escherichia coli K-12.</title>
        <authorList>
            <person name="Blattner F.R."/>
            <person name="Plunkett G. III"/>
            <person name="Bloch C.A."/>
            <person name="Perna N.T."/>
            <person name="Burland V."/>
            <person name="Riley M."/>
            <person name="Collado-Vides J."/>
            <person name="Glasner J.D."/>
            <person name="Rode C.K."/>
            <person name="Mayhew G.F."/>
            <person name="Gregor J."/>
            <person name="Davis N.W."/>
            <person name="Kirkpatrick H.A."/>
            <person name="Goeden M.A."/>
            <person name="Rose D.J."/>
            <person name="Mau B."/>
            <person name="Shao Y."/>
        </authorList>
    </citation>
    <scope>NUCLEOTIDE SEQUENCE [LARGE SCALE GENOMIC DNA]</scope>
    <source>
        <strain>K12 / MG1655 / ATCC 47076</strain>
    </source>
</reference>
<reference key="5">
    <citation type="journal article" date="2006" name="Mol. Syst. Biol.">
        <title>Highly accurate genome sequences of Escherichia coli K-12 strains MG1655 and W3110.</title>
        <authorList>
            <person name="Hayashi K."/>
            <person name="Morooka N."/>
            <person name="Yamamoto Y."/>
            <person name="Fujita K."/>
            <person name="Isono K."/>
            <person name="Choi S."/>
            <person name="Ohtsubo E."/>
            <person name="Baba T."/>
            <person name="Wanner B.L."/>
            <person name="Mori H."/>
            <person name="Horiuchi T."/>
        </authorList>
    </citation>
    <scope>NUCLEOTIDE SEQUENCE [LARGE SCALE GENOMIC DNA]</scope>
    <source>
        <strain>K12 / W3110 / ATCC 27325 / DSM 5911</strain>
    </source>
</reference>
<reference key="6">
    <citation type="journal article" date="1997" name="Electrophoresis">
        <title>Comparing the predicted and observed properties of proteins encoded in the genome of Escherichia coli K-12.</title>
        <authorList>
            <person name="Link A.J."/>
            <person name="Robison K."/>
            <person name="Church G.M."/>
        </authorList>
    </citation>
    <scope>PROTEIN SEQUENCE OF 1-12</scope>
    <source>
        <strain>K12 / EMG2</strain>
    </source>
</reference>
<reference key="7">
    <citation type="journal article" date="1989" name="DNA">
        <title>A rapid procedure for cloning genes from lambda libraries by complementation of E. coli defective mutants: application to the fabE region of the E. coli chromosome.</title>
        <authorList>
            <person name="Alix J.-H."/>
        </authorList>
    </citation>
    <scope>NUCLEOTIDE SEQUENCE [GENOMIC DNA] OF 1-160</scope>
</reference>
<reference key="8">
    <citation type="journal article" date="1994" name="Biochemistry">
        <title>Three-dimensional structure of the biotin carboxylase subunit of acetyl-CoA carboxylase.</title>
        <authorList>
            <person name="Waldrop G.L."/>
            <person name="Rayment I."/>
            <person name="Holden H.M."/>
        </authorList>
    </citation>
    <scope>X-RAY CRYSTALLOGRAPHY (2.4 ANGSTROMS)</scope>
</reference>
<reference evidence="8 9" key="9">
    <citation type="journal article" date="2000" name="J. Biol. Chem.">
        <title>Movement of the biotin carboxylase B-domain as a result of ATP binding.</title>
        <authorList>
            <person name="Thoden J.B."/>
            <person name="Blanchard C.Z."/>
            <person name="Holden H.M."/>
            <person name="Waldrop G.L."/>
        </authorList>
    </citation>
    <scope>X-RAY CRYSTALLOGRAPHY (1.9 ANGSTROMS) IN COMPLEX WITH ATP</scope>
</reference>
<reference key="10">
    <citation type="journal article" date="2006" name="Mol. Cell">
        <title>Is dimerization required for the catalytic activity of bacterial biotin carboxylase?</title>
        <authorList>
            <person name="Shen Y."/>
            <person name="Chou C.-Y."/>
            <person name="Chang G.-G."/>
            <person name="Tong L."/>
        </authorList>
    </citation>
    <scope>X-RAY CRYSTALLOGRAPHY (2.2 ANGSTROMS)</scope>
    <scope>CATALYTIC ACTIVITY</scope>
    <scope>BIOPHYSICOCHEMICAL PROPERTIES</scope>
    <scope>SUBUNIT</scope>
    <scope>MUTAGENESIS OF ARG-19; GLU-23; PHE-363 AND ARG-366</scope>
</reference>
<reference evidence="10 11" key="11">
    <citation type="journal article" date="2009" name="J. Biol. Chem.">
        <title>Crystal structure of biotin carboxylase in complex with substrates and implications for its catalytic mechanism.</title>
        <authorList>
            <person name="Chou C.Y."/>
            <person name="Yu L.P."/>
            <person name="Tong L."/>
        </authorList>
    </citation>
    <scope>X-RAY CRYSTALLOGRAPHY (1.90 ANGSTROMS) OF 1-444 WILD TYPE AND MUTANT A-296 IN COMPLEX WITH ADP; HYDROGENCARBONATE; BIOTIN AND MAGNESIUM</scope>
    <scope>CATALYTIC ACTIVITY</scope>
    <scope>BIOPHYSICOCHEMICAL PROPERTIES</scope>
    <scope>ACTIVE SITE</scope>
    <scope>MUTAGENESIS OF GLU-296 AND ARG-338</scope>
</reference>
<feature type="chain" id="PRO_0000146791" description="Biotin carboxylase">
    <location>
        <begin position="1"/>
        <end position="449"/>
    </location>
</feature>
<feature type="domain" description="Biotin carboxylation">
    <location>
        <begin position="1"/>
        <end position="445"/>
    </location>
</feature>
<feature type="domain" description="ATP-grasp" evidence="1">
    <location>
        <begin position="120"/>
        <end position="317"/>
    </location>
</feature>
<feature type="active site" evidence="4">
    <location>
        <position position="292"/>
    </location>
</feature>
<feature type="binding site" evidence="2 4 9 11">
    <location>
        <position position="116"/>
    </location>
    <ligand>
        <name>ATP</name>
        <dbReference type="ChEBI" id="CHEBI:30616"/>
    </ligand>
</feature>
<feature type="binding site" evidence="4 10 11">
    <location>
        <position position="159"/>
    </location>
    <ligand>
        <name>ATP</name>
        <dbReference type="ChEBI" id="CHEBI:30616"/>
    </ligand>
</feature>
<feature type="binding site" evidence="2 4 9 11">
    <location>
        <begin position="165"/>
        <end position="166"/>
    </location>
    <ligand>
        <name>ATP</name>
        <dbReference type="ChEBI" id="CHEBI:30616"/>
    </ligand>
</feature>
<feature type="binding site" evidence="2 4 9 10 11">
    <location>
        <begin position="201"/>
        <end position="204"/>
    </location>
    <ligand>
        <name>ATP</name>
        <dbReference type="ChEBI" id="CHEBI:30616"/>
    </ligand>
</feature>
<feature type="binding site" evidence="4 10">
    <location>
        <position position="209"/>
    </location>
    <ligand>
        <name>ATP</name>
        <dbReference type="ChEBI" id="CHEBI:30616"/>
    </ligand>
</feature>
<feature type="binding site" evidence="2 4 9 10">
    <location>
        <position position="236"/>
    </location>
    <ligand>
        <name>ATP</name>
        <dbReference type="ChEBI" id="CHEBI:30616"/>
    </ligand>
</feature>
<feature type="binding site" evidence="4 10">
    <location>
        <position position="238"/>
    </location>
    <ligand>
        <name>hydrogencarbonate</name>
        <dbReference type="ChEBI" id="CHEBI:17544"/>
    </ligand>
</feature>
<feature type="binding site" evidence="4 10">
    <location>
        <position position="276"/>
    </location>
    <ligand>
        <name>ATP</name>
        <dbReference type="ChEBI" id="CHEBI:30616"/>
    </ligand>
</feature>
<feature type="binding site" evidence="4 10">
    <location>
        <position position="276"/>
    </location>
    <ligand>
        <name>Mg(2+)</name>
        <dbReference type="ChEBI" id="CHEBI:18420"/>
        <label>1</label>
    </ligand>
</feature>
<feature type="binding site" evidence="1">
    <location>
        <position position="276"/>
    </location>
    <ligand>
        <name>Mn(2+)</name>
        <dbReference type="ChEBI" id="CHEBI:29035"/>
        <label>1</label>
    </ligand>
</feature>
<feature type="binding site" evidence="2 4 9 11">
    <location>
        <position position="288"/>
    </location>
    <ligand>
        <name>ATP</name>
        <dbReference type="ChEBI" id="CHEBI:30616"/>
    </ligand>
</feature>
<feature type="binding site" evidence="4 10 11">
    <location>
        <position position="288"/>
    </location>
    <ligand>
        <name>Mg(2+)</name>
        <dbReference type="ChEBI" id="CHEBI:18420"/>
        <label>1</label>
    </ligand>
</feature>
<feature type="binding site" evidence="1">
    <location>
        <position position="288"/>
    </location>
    <ligand>
        <name>Mg(2+)</name>
        <dbReference type="ChEBI" id="CHEBI:18420"/>
        <label>2</label>
    </ligand>
</feature>
<feature type="binding site" evidence="1">
    <location>
        <position position="288"/>
    </location>
    <ligand>
        <name>Mn(2+)</name>
        <dbReference type="ChEBI" id="CHEBI:29035"/>
        <label>1</label>
    </ligand>
</feature>
<feature type="binding site" evidence="1">
    <location>
        <position position="288"/>
    </location>
    <ligand>
        <name>Mn(2+)</name>
        <dbReference type="ChEBI" id="CHEBI:29035"/>
        <label>2</label>
    </ligand>
</feature>
<feature type="binding site" evidence="1">
    <location>
        <position position="290"/>
    </location>
    <ligand>
        <name>Mg(2+)</name>
        <dbReference type="ChEBI" id="CHEBI:18420"/>
        <label>2</label>
    </ligand>
</feature>
<feature type="binding site" evidence="1">
    <location>
        <position position="290"/>
    </location>
    <ligand>
        <name>Mn(2+)</name>
        <dbReference type="ChEBI" id="CHEBI:29035"/>
        <label>2</label>
    </ligand>
</feature>
<feature type="binding site" evidence="4 10">
    <location>
        <position position="292"/>
    </location>
    <ligand>
        <name>hydrogencarbonate</name>
        <dbReference type="ChEBI" id="CHEBI:17544"/>
    </ligand>
</feature>
<feature type="binding site" evidence="4 10">
    <location>
        <position position="295"/>
    </location>
    <ligand>
        <name>hydrogencarbonate</name>
        <dbReference type="ChEBI" id="CHEBI:17544"/>
    </ligand>
</feature>
<feature type="binding site" evidence="4 10">
    <location>
        <position position="338"/>
    </location>
    <ligand>
        <name>biotin</name>
        <dbReference type="ChEBI" id="CHEBI:57586"/>
    </ligand>
</feature>
<feature type="binding site" evidence="4 10">
    <location>
        <position position="338"/>
    </location>
    <ligand>
        <name>hydrogencarbonate</name>
        <dbReference type="ChEBI" id="CHEBI:17544"/>
    </ligand>
</feature>
<feature type="mutagenesis site" description="Loss of homodimerization. No effect on ATP binding." evidence="3">
    <original>R</original>
    <variation>E</variation>
    <location>
        <position position="19"/>
    </location>
</feature>
<feature type="mutagenesis site" description="Loss of homodimerization. No effect on ATP binding." evidence="3">
    <original>E</original>
    <variation>R</variation>
    <location>
        <position position="23"/>
    </location>
</feature>
<feature type="mutagenesis site" description="Severe reduction in catalytic activity." evidence="4">
    <original>E</original>
    <variation>A</variation>
    <location>
        <position position="296"/>
    </location>
</feature>
<feature type="mutagenesis site" description="Severe reduction in catalytic activity." evidence="4">
    <original>R</original>
    <variation>A</variation>
    <location>
        <position position="338"/>
    </location>
</feature>
<feature type="mutagenesis site" description="Loss of homodimerization. No effect on ATP binding." evidence="3">
    <original>F</original>
    <variation>A</variation>
    <location>
        <position position="363"/>
    </location>
</feature>
<feature type="mutagenesis site" description="Loss of homodimerization. No effect on ATP binding." evidence="3">
    <original>R</original>
    <variation>E</variation>
    <location>
        <position position="366"/>
    </location>
</feature>
<feature type="sequence conflict" description="In Ref. 7." evidence="5" ref="7">
    <original>G</original>
    <variation>A</variation>
    <location>
        <position position="136"/>
    </location>
</feature>
<feature type="sequence conflict" description="In Ref. 7." evidence="5" ref="7">
    <original>A</original>
    <variation>P</variation>
    <location>
        <position position="160"/>
    </location>
</feature>
<feature type="sequence conflict" description="In Ref. 2." evidence="5" ref="2">
    <original>CA</original>
    <variation>SR</variation>
    <location>
        <begin position="260"/>
        <end position="261"/>
    </location>
</feature>
<feature type="sequence conflict" description="In Ref. 1; AAA23748." evidence="5" ref="1">
    <original>L</original>
    <variation>M</variation>
    <location>
        <position position="313"/>
    </location>
</feature>
<feature type="strand" evidence="13">
    <location>
        <begin position="3"/>
        <end position="7"/>
    </location>
</feature>
<feature type="helix" evidence="13">
    <location>
        <begin position="11"/>
        <end position="24"/>
    </location>
</feature>
<feature type="strand" evidence="13">
    <location>
        <begin position="27"/>
        <end position="33"/>
    </location>
</feature>
<feature type="helix" evidence="13">
    <location>
        <begin position="34"/>
        <end position="36"/>
    </location>
</feature>
<feature type="helix" evidence="13">
    <location>
        <begin position="40"/>
        <end position="44"/>
    </location>
</feature>
<feature type="strand" evidence="13">
    <location>
        <begin position="45"/>
        <end position="52"/>
    </location>
</feature>
<feature type="helix" evidence="13">
    <location>
        <begin position="56"/>
        <end position="58"/>
    </location>
</feature>
<feature type="turn" evidence="13">
    <location>
        <begin position="59"/>
        <end position="61"/>
    </location>
</feature>
<feature type="helix" evidence="13">
    <location>
        <begin position="63"/>
        <end position="73"/>
    </location>
</feature>
<feature type="strand" evidence="13">
    <location>
        <begin position="77"/>
        <end position="79"/>
    </location>
</feature>
<feature type="turn" evidence="13">
    <location>
        <begin position="84"/>
        <end position="87"/>
    </location>
</feature>
<feature type="helix" evidence="13">
    <location>
        <begin position="89"/>
        <end position="97"/>
    </location>
</feature>
<feature type="strand" evidence="13">
    <location>
        <begin position="101"/>
        <end position="105"/>
    </location>
</feature>
<feature type="helix" evidence="13">
    <location>
        <begin position="107"/>
        <end position="114"/>
    </location>
</feature>
<feature type="helix" evidence="13">
    <location>
        <begin position="116"/>
        <end position="126"/>
    </location>
</feature>
<feature type="helix" evidence="13">
    <location>
        <begin position="142"/>
        <end position="152"/>
    </location>
</feature>
<feature type="strand" evidence="13">
    <location>
        <begin position="154"/>
        <end position="160"/>
    </location>
</feature>
<feature type="turn" evidence="13">
    <location>
        <begin position="165"/>
        <end position="168"/>
    </location>
</feature>
<feature type="strand" evidence="13">
    <location>
        <begin position="170"/>
        <end position="172"/>
    </location>
</feature>
<feature type="helix" evidence="13">
    <location>
        <begin position="175"/>
        <end position="193"/>
    </location>
</feature>
<feature type="strand" evidence="13">
    <location>
        <begin position="198"/>
        <end position="202"/>
    </location>
</feature>
<feature type="strand" evidence="13">
    <location>
        <begin position="208"/>
        <end position="216"/>
    </location>
</feature>
<feature type="strand" evidence="12">
    <location>
        <begin position="218"/>
        <end position="220"/>
    </location>
</feature>
<feature type="strand" evidence="13">
    <location>
        <begin position="222"/>
        <end position="234"/>
    </location>
</feature>
<feature type="strand" evidence="13">
    <location>
        <begin position="237"/>
        <end position="244"/>
    </location>
</feature>
<feature type="helix" evidence="13">
    <location>
        <begin position="250"/>
        <end position="267"/>
    </location>
</feature>
<feature type="strand" evidence="13">
    <location>
        <begin position="271"/>
        <end position="280"/>
    </location>
</feature>
<feature type="strand" evidence="13">
    <location>
        <begin position="283"/>
        <end position="290"/>
    </location>
</feature>
<feature type="helix" evidence="13">
    <location>
        <begin position="297"/>
        <end position="304"/>
    </location>
</feature>
<feature type="helix" evidence="13">
    <location>
        <begin position="308"/>
        <end position="317"/>
    </location>
</feature>
<feature type="helix" evidence="13">
    <location>
        <begin position="325"/>
        <end position="327"/>
    </location>
</feature>
<feature type="strand" evidence="13">
    <location>
        <begin position="332"/>
        <end position="340"/>
    </location>
</feature>
<feature type="turn" evidence="13">
    <location>
        <begin position="344"/>
        <end position="346"/>
    </location>
</feature>
<feature type="strand" evidence="13">
    <location>
        <begin position="356"/>
        <end position="358"/>
    </location>
</feature>
<feature type="strand" evidence="13">
    <location>
        <begin position="365"/>
        <end position="368"/>
    </location>
</feature>
<feature type="strand" evidence="13">
    <location>
        <begin position="379"/>
        <end position="381"/>
    </location>
</feature>
<feature type="strand" evidence="13">
    <location>
        <begin position="383"/>
        <end position="394"/>
    </location>
</feature>
<feature type="helix" evidence="13">
    <location>
        <begin position="395"/>
        <end position="408"/>
    </location>
</feature>
<feature type="strand" evidence="13">
    <location>
        <begin position="410"/>
        <end position="414"/>
    </location>
</feature>
<feature type="helix" evidence="13">
    <location>
        <begin position="418"/>
        <end position="425"/>
    </location>
</feature>
<feature type="helix" evidence="13">
    <location>
        <begin position="428"/>
        <end position="432"/>
    </location>
</feature>
<feature type="helix" evidence="13">
    <location>
        <begin position="439"/>
        <end position="444"/>
    </location>
</feature>
<protein>
    <recommendedName>
        <fullName>Biotin carboxylase</fullName>
        <ecNumber evidence="2 4">6.3.4.14</ecNumber>
    </recommendedName>
    <alternativeName>
        <fullName evidence="5">Acetyl-coenzyme A carboxylase biotin carboxylase subunit A</fullName>
    </alternativeName>
</protein>
<dbReference type="EC" id="6.3.4.14" evidence="2 4"/>
<dbReference type="EMBL" id="M79446">
    <property type="protein sequence ID" value="AAA23748.1"/>
    <property type="molecule type" value="Genomic_DNA"/>
</dbReference>
<dbReference type="EMBL" id="M80458">
    <property type="protein sequence ID" value="AAA23409.1"/>
    <property type="molecule type" value="Genomic_DNA"/>
</dbReference>
<dbReference type="EMBL" id="M83198">
    <property type="protein sequence ID" value="AAA23746.1"/>
    <property type="molecule type" value="Genomic_DNA"/>
</dbReference>
<dbReference type="EMBL" id="U18997">
    <property type="protein sequence ID" value="AAA58059.1"/>
    <property type="molecule type" value="Genomic_DNA"/>
</dbReference>
<dbReference type="EMBL" id="U00096">
    <property type="protein sequence ID" value="AAC76288.1"/>
    <property type="molecule type" value="Genomic_DNA"/>
</dbReference>
<dbReference type="EMBL" id="AP009048">
    <property type="protein sequence ID" value="BAE77297.1"/>
    <property type="molecule type" value="Genomic_DNA"/>
</dbReference>
<dbReference type="EMBL" id="M32214">
    <property type="status" value="NOT_ANNOTATED_CDS"/>
    <property type="molecule type" value="Genomic_DNA"/>
</dbReference>
<dbReference type="PIR" id="JS0632">
    <property type="entry name" value="JS0632"/>
</dbReference>
<dbReference type="RefSeq" id="NP_417722.1">
    <property type="nucleotide sequence ID" value="NC_000913.3"/>
</dbReference>
<dbReference type="RefSeq" id="WP_000884639.1">
    <property type="nucleotide sequence ID" value="NZ_STEB01000012.1"/>
</dbReference>
<dbReference type="PDB" id="1BNC">
    <property type="method" value="X-ray"/>
    <property type="resolution" value="2.40 A"/>
    <property type="chains" value="A/B=1-449"/>
</dbReference>
<dbReference type="PDB" id="1DV1">
    <property type="method" value="X-ray"/>
    <property type="resolution" value="1.90 A"/>
    <property type="chains" value="A/B=1-449"/>
</dbReference>
<dbReference type="PDB" id="1DV2">
    <property type="method" value="X-ray"/>
    <property type="resolution" value="2.50 A"/>
    <property type="chains" value="A/B=1-449"/>
</dbReference>
<dbReference type="PDB" id="2GPS">
    <property type="method" value="X-ray"/>
    <property type="resolution" value="2.80 A"/>
    <property type="chains" value="A/B=1-449"/>
</dbReference>
<dbReference type="PDB" id="2GPW">
    <property type="method" value="X-ray"/>
    <property type="resolution" value="2.20 A"/>
    <property type="chains" value="A/B/C/D=1-449"/>
</dbReference>
<dbReference type="PDB" id="2J9G">
    <property type="method" value="X-ray"/>
    <property type="resolution" value="2.05 A"/>
    <property type="chains" value="A/B=1-449"/>
</dbReference>
<dbReference type="PDB" id="2V58">
    <property type="method" value="X-ray"/>
    <property type="resolution" value="2.10 A"/>
    <property type="chains" value="A/B=1-449"/>
</dbReference>
<dbReference type="PDB" id="2V59">
    <property type="method" value="X-ray"/>
    <property type="resolution" value="2.40 A"/>
    <property type="chains" value="A/B=1-449"/>
</dbReference>
<dbReference type="PDB" id="2V5A">
    <property type="method" value="X-ray"/>
    <property type="resolution" value="2.31 A"/>
    <property type="chains" value="A/B=1-449"/>
</dbReference>
<dbReference type="PDB" id="2VR1">
    <property type="method" value="X-ray"/>
    <property type="resolution" value="2.60 A"/>
    <property type="chains" value="A/B=1-449"/>
</dbReference>
<dbReference type="PDB" id="2W6M">
    <property type="method" value="X-ray"/>
    <property type="resolution" value="2.00 A"/>
    <property type="chains" value="A/B=1-449"/>
</dbReference>
<dbReference type="PDB" id="2W6N">
    <property type="method" value="X-ray"/>
    <property type="resolution" value="1.87 A"/>
    <property type="chains" value="A/B=1-449"/>
</dbReference>
<dbReference type="PDB" id="2W6O">
    <property type="method" value="X-ray"/>
    <property type="resolution" value="2.50 A"/>
    <property type="chains" value="A/C=1-449"/>
</dbReference>
<dbReference type="PDB" id="2W6P">
    <property type="method" value="X-ray"/>
    <property type="resolution" value="1.85 A"/>
    <property type="chains" value="A/B=1-449"/>
</dbReference>
<dbReference type="PDB" id="2W6Q">
    <property type="method" value="X-ray"/>
    <property type="resolution" value="2.05 A"/>
    <property type="chains" value="A/B=1-449"/>
</dbReference>
<dbReference type="PDB" id="2W6Z">
    <property type="method" value="X-ray"/>
    <property type="resolution" value="1.90 A"/>
    <property type="chains" value="A/B=1-449"/>
</dbReference>
<dbReference type="PDB" id="2W70">
    <property type="method" value="X-ray"/>
    <property type="resolution" value="1.77 A"/>
    <property type="chains" value="A/B=1-449"/>
</dbReference>
<dbReference type="PDB" id="2W71">
    <property type="method" value="X-ray"/>
    <property type="resolution" value="1.99 A"/>
    <property type="chains" value="A/C=1-449"/>
</dbReference>
<dbReference type="PDB" id="3G8C">
    <property type="method" value="X-ray"/>
    <property type="resolution" value="2.00 A"/>
    <property type="chains" value="A/B=1-444"/>
</dbReference>
<dbReference type="PDB" id="3G8D">
    <property type="method" value="X-ray"/>
    <property type="resolution" value="1.90 A"/>
    <property type="chains" value="A/B=1-444"/>
</dbReference>
<dbReference type="PDB" id="3JZF">
    <property type="method" value="X-ray"/>
    <property type="resolution" value="2.13 A"/>
    <property type="chains" value="A/B=1-449"/>
</dbReference>
<dbReference type="PDB" id="3JZI">
    <property type="method" value="X-ray"/>
    <property type="resolution" value="2.31 A"/>
    <property type="chains" value="A/B=1-449"/>
</dbReference>
<dbReference type="PDB" id="3RUP">
    <property type="method" value="X-ray"/>
    <property type="resolution" value="1.99 A"/>
    <property type="chains" value="A/B=1-449"/>
</dbReference>
<dbReference type="PDB" id="3RV3">
    <property type="method" value="X-ray"/>
    <property type="resolution" value="1.91 A"/>
    <property type="chains" value="A/B=1-449"/>
</dbReference>
<dbReference type="PDB" id="3RV4">
    <property type="method" value="X-ray"/>
    <property type="resolution" value="1.98 A"/>
    <property type="chains" value="A=1-449"/>
</dbReference>
<dbReference type="PDB" id="4HR7">
    <property type="method" value="X-ray"/>
    <property type="resolution" value="2.50 A"/>
    <property type="chains" value="A/C/E/F=1-449"/>
</dbReference>
<dbReference type="PDB" id="6OI9">
    <property type="method" value="X-ray"/>
    <property type="resolution" value="2.06 A"/>
    <property type="chains" value="A/B=1-449"/>
</dbReference>
<dbReference type="PDB" id="8UZ2">
    <property type="method" value="EM"/>
    <property type="resolution" value="3.18 A"/>
    <property type="chains" value="C/G=1-446"/>
</dbReference>
<dbReference type="PDBsum" id="1BNC"/>
<dbReference type="PDBsum" id="1DV1"/>
<dbReference type="PDBsum" id="1DV2"/>
<dbReference type="PDBsum" id="2GPS"/>
<dbReference type="PDBsum" id="2GPW"/>
<dbReference type="PDBsum" id="2J9G"/>
<dbReference type="PDBsum" id="2V58"/>
<dbReference type="PDBsum" id="2V59"/>
<dbReference type="PDBsum" id="2V5A"/>
<dbReference type="PDBsum" id="2VR1"/>
<dbReference type="PDBsum" id="2W6M"/>
<dbReference type="PDBsum" id="2W6N"/>
<dbReference type="PDBsum" id="2W6O"/>
<dbReference type="PDBsum" id="2W6P"/>
<dbReference type="PDBsum" id="2W6Q"/>
<dbReference type="PDBsum" id="2W6Z"/>
<dbReference type="PDBsum" id="2W70"/>
<dbReference type="PDBsum" id="2W71"/>
<dbReference type="PDBsum" id="3G8C"/>
<dbReference type="PDBsum" id="3G8D"/>
<dbReference type="PDBsum" id="3JZF"/>
<dbReference type="PDBsum" id="3JZI"/>
<dbReference type="PDBsum" id="3RUP"/>
<dbReference type="PDBsum" id="3RV3"/>
<dbReference type="PDBsum" id="3RV4"/>
<dbReference type="PDBsum" id="4HR7"/>
<dbReference type="PDBsum" id="6OI9"/>
<dbReference type="PDBsum" id="8UZ2"/>
<dbReference type="EMDB" id="EMD-42831"/>
<dbReference type="SMR" id="P24182"/>
<dbReference type="BioGRID" id="4262456">
    <property type="interactions" value="278"/>
</dbReference>
<dbReference type="BioGRID" id="852073">
    <property type="interactions" value="6"/>
</dbReference>
<dbReference type="ComplexPortal" id="CPX-3206">
    <property type="entry name" value="Acetyl-CoA carboxylase complex"/>
</dbReference>
<dbReference type="DIP" id="DIP-9035N"/>
<dbReference type="FunCoup" id="P24182">
    <property type="interactions" value="949"/>
</dbReference>
<dbReference type="IntAct" id="P24182">
    <property type="interactions" value="20"/>
</dbReference>
<dbReference type="STRING" id="511145.b3256"/>
<dbReference type="BindingDB" id="P24182"/>
<dbReference type="DrugBank" id="DB08314">
    <property type="generic name" value="(2-AMINO-1,3-OXAZOL-5-YL)-(3-BROMOPHENYL)METHANONE"/>
</dbReference>
<dbReference type="DrugBank" id="DB08315">
    <property type="generic name" value="2-AMINO-N,N-BIS(PHENYLMETHYL)-1,3-OXAZOLE-5-CARBOXAMIDE"/>
</dbReference>
<dbReference type="DrugBank" id="DB08074">
    <property type="generic name" value="3-(3-Methyl-2-buten-1-yl)-3H-purin-6-amine"/>
</dbReference>
<dbReference type="DrugBank" id="DB08075">
    <property type="generic name" value="4-(2-amino-1,3-thiazol-4-yl)pyrimidin-2-amine"/>
</dbReference>
<dbReference type="DrugBank" id="DB08076">
    <property type="generic name" value="4-[1-(2,6-dichlorobenzyl)-2-methyl-1H-imidazol-4-yl]pyrimidin-2-amine"/>
</dbReference>
<dbReference type="DrugBank" id="DB08316">
    <property type="generic name" value="4-amino-7,7-dimethyl-7,8-dihydroquinazolin-5(6H)-one"/>
</dbReference>
<dbReference type="DrugBank" id="DB08317">
    <property type="generic name" value="5-methyl-6-phenylquinazoline-2,4-diamine"/>
</dbReference>
<dbReference type="DrugBank" id="DB08144">
    <property type="generic name" value="6-(2,6-dibromophenyl)pyrido[2,3-d]pyrimidine-2,7-diamine"/>
</dbReference>
<dbReference type="DrugBank" id="DB08145">
    <property type="generic name" value="6-(2,6-DIMETHOXYPHENYL)PYRIDO[2,3-D]PYRIMIDINE-2,7-DIAMINE"/>
</dbReference>
<dbReference type="DrugBank" id="DB08318">
    <property type="generic name" value="6-(2-phenoxyethoxy)-1,3,5-triazine-2,4-diamine"/>
</dbReference>
<dbReference type="DrugBank" id="DB08146">
    <property type="generic name" value="7-(2,5-dihydropyrrol-1-yl)-6-phenyl-pyrido[6,5-d]pyrimidin-2-amine"/>
</dbReference>
<dbReference type="jPOST" id="P24182"/>
<dbReference type="PaxDb" id="511145-b3256"/>
<dbReference type="EnsemblBacteria" id="AAC76288">
    <property type="protein sequence ID" value="AAC76288"/>
    <property type="gene ID" value="b3256"/>
</dbReference>
<dbReference type="GeneID" id="93778731"/>
<dbReference type="GeneID" id="947761"/>
<dbReference type="KEGG" id="ecj:JW3224"/>
<dbReference type="KEGG" id="eco:b3256"/>
<dbReference type="KEGG" id="ecoc:C3026_17715"/>
<dbReference type="PATRIC" id="fig|511145.12.peg.3355"/>
<dbReference type="EchoBASE" id="EB0272"/>
<dbReference type="eggNOG" id="COG0439">
    <property type="taxonomic scope" value="Bacteria"/>
</dbReference>
<dbReference type="HOGENOM" id="CLU_000395_3_2_6"/>
<dbReference type="InParanoid" id="P24182"/>
<dbReference type="OMA" id="FINKPKH"/>
<dbReference type="OrthoDB" id="9763189at2"/>
<dbReference type="PhylomeDB" id="P24182"/>
<dbReference type="BioCyc" id="EcoCyc:BIOTIN-CARBOXYL-MONOMER"/>
<dbReference type="BioCyc" id="MetaCyc:BIOTIN-CARBOXYL-MONOMER"/>
<dbReference type="BRENDA" id="6.3.4.14">
    <property type="organism ID" value="2026"/>
</dbReference>
<dbReference type="SABIO-RK" id="P24182"/>
<dbReference type="UniPathway" id="UPA00655">
    <property type="reaction ID" value="UER00711"/>
</dbReference>
<dbReference type="EvolutionaryTrace" id="P24182"/>
<dbReference type="PRO" id="PR:P24182"/>
<dbReference type="Proteomes" id="UP000000625">
    <property type="component" value="Chromosome"/>
</dbReference>
<dbReference type="GO" id="GO:0009317">
    <property type="term" value="C:acetyl-CoA carboxylase complex"/>
    <property type="evidence" value="ECO:0000314"/>
    <property type="project" value="ComplexPortal"/>
</dbReference>
<dbReference type="GO" id="GO:0005737">
    <property type="term" value="C:cytoplasm"/>
    <property type="evidence" value="ECO:0000305"/>
    <property type="project" value="EcoliWiki"/>
</dbReference>
<dbReference type="GO" id="GO:0005829">
    <property type="term" value="C:cytosol"/>
    <property type="evidence" value="ECO:0000314"/>
    <property type="project" value="EcoCyc"/>
</dbReference>
<dbReference type="GO" id="GO:0003989">
    <property type="term" value="F:acetyl-CoA carboxylase activity"/>
    <property type="evidence" value="ECO:0007669"/>
    <property type="project" value="UniProtKB-EC"/>
</dbReference>
<dbReference type="GO" id="GO:0005524">
    <property type="term" value="F:ATP binding"/>
    <property type="evidence" value="ECO:0007669"/>
    <property type="project" value="UniProtKB-KW"/>
</dbReference>
<dbReference type="GO" id="GO:0004075">
    <property type="term" value="F:biotin carboxylase activity"/>
    <property type="evidence" value="ECO:0000314"/>
    <property type="project" value="EcoliWiki"/>
</dbReference>
<dbReference type="GO" id="GO:0046872">
    <property type="term" value="F:metal ion binding"/>
    <property type="evidence" value="ECO:0007669"/>
    <property type="project" value="UniProtKB-KW"/>
</dbReference>
<dbReference type="GO" id="GO:0042803">
    <property type="term" value="F:protein homodimerization activity"/>
    <property type="evidence" value="ECO:0000314"/>
    <property type="project" value="EcoCyc"/>
</dbReference>
<dbReference type="GO" id="GO:0006633">
    <property type="term" value="P:fatty acid biosynthetic process"/>
    <property type="evidence" value="ECO:0000314"/>
    <property type="project" value="ComplexPortal"/>
</dbReference>
<dbReference type="GO" id="GO:2001295">
    <property type="term" value="P:malonyl-CoA biosynthetic process"/>
    <property type="evidence" value="ECO:0000314"/>
    <property type="project" value="ComplexPortal"/>
</dbReference>
<dbReference type="GO" id="GO:0045717">
    <property type="term" value="P:negative regulation of fatty acid biosynthetic process"/>
    <property type="evidence" value="ECO:0000315"/>
    <property type="project" value="EcoliWiki"/>
</dbReference>
<dbReference type="FunFam" id="3.30.1490.20:FF:000012">
    <property type="entry name" value="Biotin carboxylase"/>
    <property type="match status" value="1"/>
</dbReference>
<dbReference type="FunFam" id="3.30.470.20:FF:000021">
    <property type="entry name" value="Biotin carboxylase"/>
    <property type="match status" value="1"/>
</dbReference>
<dbReference type="FunFam" id="3.30.470.20:FF:000023">
    <property type="entry name" value="Biotin carboxylase"/>
    <property type="match status" value="1"/>
</dbReference>
<dbReference type="Gene3D" id="3.30.1490.20">
    <property type="entry name" value="ATP-grasp fold, A domain"/>
    <property type="match status" value="1"/>
</dbReference>
<dbReference type="Gene3D" id="3.30.470.20">
    <property type="entry name" value="ATP-grasp fold, B domain"/>
    <property type="match status" value="2"/>
</dbReference>
<dbReference type="InterPro" id="IPR051602">
    <property type="entry name" value="ACC_Biotin_Carboxylase"/>
</dbReference>
<dbReference type="InterPro" id="IPR004549">
    <property type="entry name" value="Acetyl_CoA_COase_biotin_COase"/>
</dbReference>
<dbReference type="InterPro" id="IPR011761">
    <property type="entry name" value="ATP-grasp"/>
</dbReference>
<dbReference type="InterPro" id="IPR013815">
    <property type="entry name" value="ATP_grasp_subdomain_1"/>
</dbReference>
<dbReference type="InterPro" id="IPR005481">
    <property type="entry name" value="BC-like_N"/>
</dbReference>
<dbReference type="InterPro" id="IPR011764">
    <property type="entry name" value="Biotin_carboxylation_dom"/>
</dbReference>
<dbReference type="InterPro" id="IPR005482">
    <property type="entry name" value="Biotin_COase_C"/>
</dbReference>
<dbReference type="InterPro" id="IPR005479">
    <property type="entry name" value="CbamoylP_synth_lsu-like_ATP-bd"/>
</dbReference>
<dbReference type="InterPro" id="IPR016185">
    <property type="entry name" value="PreATP-grasp_dom_sf"/>
</dbReference>
<dbReference type="InterPro" id="IPR011054">
    <property type="entry name" value="Rudment_hybrid_motif"/>
</dbReference>
<dbReference type="NCBIfam" id="TIGR00514">
    <property type="entry name" value="accC"/>
    <property type="match status" value="1"/>
</dbReference>
<dbReference type="NCBIfam" id="NF006367">
    <property type="entry name" value="PRK08591.1"/>
    <property type="match status" value="1"/>
</dbReference>
<dbReference type="PANTHER" id="PTHR48095:SF2">
    <property type="entry name" value="BIOTIN CARBOXYLASE, CHLOROPLASTIC"/>
    <property type="match status" value="1"/>
</dbReference>
<dbReference type="PANTHER" id="PTHR48095">
    <property type="entry name" value="PYRUVATE CARBOXYLASE SUBUNIT A"/>
    <property type="match status" value="1"/>
</dbReference>
<dbReference type="Pfam" id="PF02785">
    <property type="entry name" value="Biotin_carb_C"/>
    <property type="match status" value="1"/>
</dbReference>
<dbReference type="Pfam" id="PF00289">
    <property type="entry name" value="Biotin_carb_N"/>
    <property type="match status" value="1"/>
</dbReference>
<dbReference type="Pfam" id="PF02786">
    <property type="entry name" value="CPSase_L_D2"/>
    <property type="match status" value="1"/>
</dbReference>
<dbReference type="SMART" id="SM00878">
    <property type="entry name" value="Biotin_carb_C"/>
    <property type="match status" value="1"/>
</dbReference>
<dbReference type="SUPFAM" id="SSF56059">
    <property type="entry name" value="Glutathione synthetase ATP-binding domain-like"/>
    <property type="match status" value="1"/>
</dbReference>
<dbReference type="SUPFAM" id="SSF52440">
    <property type="entry name" value="PreATP-grasp domain"/>
    <property type="match status" value="1"/>
</dbReference>
<dbReference type="SUPFAM" id="SSF51246">
    <property type="entry name" value="Rudiment single hybrid motif"/>
    <property type="match status" value="1"/>
</dbReference>
<dbReference type="PROSITE" id="PS50975">
    <property type="entry name" value="ATP_GRASP"/>
    <property type="match status" value="1"/>
</dbReference>
<dbReference type="PROSITE" id="PS50979">
    <property type="entry name" value="BC"/>
    <property type="match status" value="1"/>
</dbReference>
<dbReference type="PROSITE" id="PS00866">
    <property type="entry name" value="CPSASE_1"/>
    <property type="match status" value="1"/>
</dbReference>
<dbReference type="PROSITE" id="PS00867">
    <property type="entry name" value="CPSASE_2"/>
    <property type="match status" value="1"/>
</dbReference>
<organism>
    <name type="scientific">Escherichia coli (strain K12)</name>
    <dbReference type="NCBI Taxonomy" id="83333"/>
    <lineage>
        <taxon>Bacteria</taxon>
        <taxon>Pseudomonadati</taxon>
        <taxon>Pseudomonadota</taxon>
        <taxon>Gammaproteobacteria</taxon>
        <taxon>Enterobacterales</taxon>
        <taxon>Enterobacteriaceae</taxon>
        <taxon>Escherichia</taxon>
    </lineage>
</organism>
<comment type="function">
    <text evidence="6 7">This protein is a component of the acetyl coenzyme A carboxylase complex; first, biotin carboxylase catalyzes the carboxylation of the carrier protein and then the transcarboxylase transfers the carboxyl group to form malonyl-CoA.</text>
</comment>
<comment type="catalytic activity">
    <reaction evidence="3 4">
        <text>N(6)-biotinyl-L-lysyl-[protein] + hydrogencarbonate + ATP = N(6)-carboxybiotinyl-L-lysyl-[protein] + ADP + phosphate + H(+)</text>
        <dbReference type="Rhea" id="RHEA:13501"/>
        <dbReference type="Rhea" id="RHEA-COMP:10505"/>
        <dbReference type="Rhea" id="RHEA-COMP:10506"/>
        <dbReference type="ChEBI" id="CHEBI:15378"/>
        <dbReference type="ChEBI" id="CHEBI:17544"/>
        <dbReference type="ChEBI" id="CHEBI:30616"/>
        <dbReference type="ChEBI" id="CHEBI:43474"/>
        <dbReference type="ChEBI" id="CHEBI:83144"/>
        <dbReference type="ChEBI" id="CHEBI:83145"/>
        <dbReference type="ChEBI" id="CHEBI:456216"/>
        <dbReference type="EC" id="6.3.4.14"/>
    </reaction>
</comment>
<comment type="cofactor">
    <cofactor evidence="1">
        <name>Mg(2+)</name>
        <dbReference type="ChEBI" id="CHEBI:18420"/>
    </cofactor>
    <cofactor evidence="1">
        <name>Mn(2+)</name>
        <dbReference type="ChEBI" id="CHEBI:29035"/>
    </cofactor>
    <text evidence="1">Binds 2 magnesium or manganese ions per subunit.</text>
</comment>
<comment type="biophysicochemical properties">
    <kinetics>
        <KM evidence="3">115 uM for ATP (at pH 8)</KM>
        <KM evidence="4">16.2 mM for hydrogencarbonate (at pH 8)</KM>
        <KM evidence="4">35.1 mM for biotin (at pH 8)</KM>
        <text evidence="3 4">kcat is 0.228 sec(-1) with ATP as substrate (at pH 8) (PubMed:16793549). kcat is 0.44 sec(-1) with hydrogencarbonate as substrate (at pH 8) (PubMed:19213731). kcat is 0.58 sec(-1) with biotin as substrate (at pH 8) (PubMed:19213731).</text>
    </kinetics>
</comment>
<comment type="pathway">
    <text evidence="6 7">Lipid metabolism; malonyl-CoA biosynthesis; malonyl-CoA from acetyl-CoA: step 1/1.</text>
</comment>
<comment type="subunit">
    <text evidence="2 3">Acetyl-CoA carboxylase is a heterohexamer of biotin carboxyl carrier protein, biotin carboxylase and the two subunits of carboxyl transferase in a 2:2 complex.</text>
</comment>
<comment type="interaction">
    <interactant intactId="EBI-542308">
        <id>P24182</id>
    </interactant>
    <interactant intactId="EBI-542320">
        <id>P0ABD8</id>
        <label>accB</label>
    </interactant>
    <organismsDiffer>false</organismsDiffer>
    <experiments>10</experiments>
</comment>
<comment type="interaction">
    <interactant intactId="EBI-542308">
        <id>P24182</id>
    </interactant>
    <interactant intactId="EBI-542064">
        <id>P0A9Q5</id>
        <label>accD</label>
    </interactant>
    <organismsDiffer>false</organismsDiffer>
    <experiments>4</experiments>
</comment>
<comment type="interaction">
    <interactant intactId="EBI-542308">
        <id>P24182</id>
    </interactant>
    <interactant intactId="EBI-542376">
        <id>P16703</id>
        <label>cysM</label>
    </interactant>
    <organismsDiffer>false</organismsDiffer>
    <experiments>3</experiments>
</comment>
<comment type="interaction">
    <interactant intactId="EBI-542308">
        <id>P24182</id>
    </interactant>
    <interactant intactId="EBI-552457">
        <id>P25539</id>
        <label>ribD</label>
    </interactant>
    <organismsDiffer>false</organismsDiffer>
    <experiments>3</experiments>
</comment>
<proteinExistence type="evidence at protein level"/>